<dbReference type="EMBL" id="U00089">
    <property type="protein sequence ID" value="AAB96111.1"/>
    <property type="molecule type" value="Genomic_DNA"/>
</dbReference>
<dbReference type="PIR" id="S73789">
    <property type="entry name" value="S73789"/>
</dbReference>
<dbReference type="RefSeq" id="NP_110061.1">
    <property type="nucleotide sequence ID" value="NC_000912.1"/>
</dbReference>
<dbReference type="STRING" id="272634.MPN_373"/>
<dbReference type="EnsemblBacteria" id="AAB96111">
    <property type="protein sequence ID" value="AAB96111"/>
    <property type="gene ID" value="MPN_373"/>
</dbReference>
<dbReference type="KEGG" id="mpn:MPN_373"/>
<dbReference type="PATRIC" id="fig|272634.6.peg.404"/>
<dbReference type="HOGENOM" id="CLU_1342056_0_0_14"/>
<dbReference type="BioCyc" id="MPNE272634:G1GJ3-587-MONOMER"/>
<dbReference type="Proteomes" id="UP000000808">
    <property type="component" value="Chromosome"/>
</dbReference>
<dbReference type="GO" id="GO:0005886">
    <property type="term" value="C:plasma membrane"/>
    <property type="evidence" value="ECO:0007669"/>
    <property type="project" value="UniProtKB-SubCell"/>
</dbReference>
<feature type="chain" id="PRO_0000210666" description="Uncharacterized protein MPN_373">
    <location>
        <begin position="1"/>
        <end position="204"/>
    </location>
</feature>
<feature type="transmembrane region" description="Helical" evidence="1">
    <location>
        <begin position="160"/>
        <end position="180"/>
    </location>
</feature>
<evidence type="ECO:0000255" key="1"/>
<evidence type="ECO:0000269" key="2">
    <source>
    </source>
</evidence>
<evidence type="ECO:0000305" key="3"/>
<name>Y373_MYCPN</name>
<reference key="1">
    <citation type="journal article" date="1996" name="Nucleic Acids Res.">
        <title>Complete sequence analysis of the genome of the bacterium Mycoplasma pneumoniae.</title>
        <authorList>
            <person name="Himmelreich R."/>
            <person name="Hilbert H."/>
            <person name="Plagens H."/>
            <person name="Pirkl E."/>
            <person name="Li B.-C."/>
            <person name="Herrmann R."/>
        </authorList>
    </citation>
    <scope>NUCLEOTIDE SEQUENCE [LARGE SCALE GENOMIC DNA]</scope>
    <source>
        <strain>ATCC 29342 / M129 / Subtype 1</strain>
    </source>
</reference>
<reference key="2">
    <citation type="journal article" date="2010" name="Mol. Microbiol.">
        <title>Mycoplasma pneumoniae Community Acquired Respiratory Distress Syndrome toxin expression reveals growth phase and infection-dependent regulation.</title>
        <authorList>
            <person name="Kannan T.R."/>
            <person name="Musatovova O."/>
            <person name="Balasubramanian S."/>
            <person name="Cagle M."/>
            <person name="Jordan J.L."/>
            <person name="Krunkosky T.M."/>
            <person name="Davis A."/>
            <person name="Hardy R.D."/>
            <person name="Baseman J.B."/>
        </authorList>
    </citation>
    <scope>INDUCTION</scope>
    <source>
        <strain>S1</strain>
    </source>
</reference>
<gene>
    <name type="ordered locus">MPN_373</name>
    <name type="ORF">A19_orf204</name>
    <name type="ORF">MP463</name>
</gene>
<comment type="subcellular location">
    <subcellularLocation>
        <location evidence="3">Cell membrane</location>
        <topology evidence="1">Single-pass membrane protein</topology>
    </subcellularLocation>
</comment>
<comment type="induction">
    <text evidence="2">Expressed during cell growth.</text>
</comment>
<comment type="similarity">
    <text evidence="3">To M.pneumoniae MPN_373 C-terminal region.</text>
</comment>
<protein>
    <recommendedName>
        <fullName>Uncharacterized protein MPN_373</fullName>
    </recommendedName>
</protein>
<proteinExistence type="evidence at transcript level"/>
<sequence length="204" mass="22588">MVSDGGGQTDNNAEGGNLRIALTKNAFNPNQSTTVDIPYKIENRSVGNNKEQKTLVFDFSGLNPYEYNMIVGALFTDSSFINDAYAPIQSTFQRQLKEFLQVKYENQVGANGSFDLFKPRSLSSQQLVQGERSLDGFTVELNANGGSFNFLTHVDPLVAGLTVAAIASVVVAGAVTYLVVRRYRKRNEFVDKIFASNIRAKQWR</sequence>
<keyword id="KW-1003">Cell membrane</keyword>
<keyword id="KW-0472">Membrane</keyword>
<keyword id="KW-1185">Reference proteome</keyword>
<keyword id="KW-0812">Transmembrane</keyword>
<keyword id="KW-1133">Transmembrane helix</keyword>
<accession>P75408</accession>
<organism>
    <name type="scientific">Mycoplasma pneumoniae (strain ATCC 29342 / M129 / Subtype 1)</name>
    <name type="common">Mycoplasmoides pneumoniae</name>
    <dbReference type="NCBI Taxonomy" id="272634"/>
    <lineage>
        <taxon>Bacteria</taxon>
        <taxon>Bacillati</taxon>
        <taxon>Mycoplasmatota</taxon>
        <taxon>Mycoplasmoidales</taxon>
        <taxon>Mycoplasmoidaceae</taxon>
        <taxon>Mycoplasmoides</taxon>
    </lineage>
</organism>